<dbReference type="EMBL" id="Y00158">
    <property type="protein sequence ID" value="CAA68354.1"/>
    <property type="molecule type" value="Genomic_DNA"/>
</dbReference>
<dbReference type="EMBL" id="CP000099">
    <property type="protein sequence ID" value="AAZ69870.1"/>
    <property type="molecule type" value="Genomic_DNA"/>
</dbReference>
<dbReference type="PIR" id="B29525">
    <property type="entry name" value="B29525"/>
</dbReference>
<dbReference type="SMR" id="P07958"/>
<dbReference type="STRING" id="269797.Mbar_A0896"/>
<dbReference type="PaxDb" id="269797-Mbar_A0896"/>
<dbReference type="GeneID" id="24821494"/>
<dbReference type="KEGG" id="mba:Mbar_A0896"/>
<dbReference type="eggNOG" id="arCOG04859">
    <property type="taxonomic scope" value="Archaea"/>
</dbReference>
<dbReference type="HOGENOM" id="CLU_118415_0_0_2"/>
<dbReference type="OrthoDB" id="109281at2157"/>
<dbReference type="GO" id="GO:0015948">
    <property type="term" value="P:methanogenesis"/>
    <property type="evidence" value="ECO:0007669"/>
    <property type="project" value="UniProtKB-KW"/>
</dbReference>
<dbReference type="InterPro" id="IPR003901">
    <property type="entry name" value="Me_CoM_Rdtase_D"/>
</dbReference>
<dbReference type="NCBIfam" id="TIGR03260">
    <property type="entry name" value="met_CoM_red_D"/>
    <property type="match status" value="1"/>
</dbReference>
<dbReference type="Pfam" id="PF02505">
    <property type="entry name" value="MCR_D"/>
    <property type="match status" value="1"/>
</dbReference>
<dbReference type="PIRSF" id="PIRSF005636">
    <property type="entry name" value="McrD"/>
    <property type="match status" value="1"/>
</dbReference>
<sequence>MSDSASNTEDSIQIEIFPSRILSPETAQKLMGEIYKVDGVIRVMVQGNRLPDRVSAGPGTGEKVEHPLRKPIQIGDQVIELKICVGRIRVELSNAEAKEQIREVCEKLLPFPFEFREGHFLRKKPTVTDYAKLGPEADPRLLGMVDPKAKTDQLIFIEKQKEQEEDKDKDE</sequence>
<feature type="chain" id="PRO_0000147491" description="Methyl-coenzyme M reductase operon protein D">
    <location>
        <begin position="1"/>
        <end position="171"/>
    </location>
</feature>
<name>MCRD_METBF</name>
<comment type="subunit">
    <text>MCR is composed of three subunits: alpha, beta, and gamma. The function of proteins C and D is not known.</text>
</comment>
<keyword id="KW-0484">Methanogenesis</keyword>
<organism>
    <name type="scientific">Methanosarcina barkeri (strain Fusaro / DSM 804)</name>
    <dbReference type="NCBI Taxonomy" id="269797"/>
    <lineage>
        <taxon>Archaea</taxon>
        <taxon>Methanobacteriati</taxon>
        <taxon>Methanobacteriota</taxon>
        <taxon>Stenosarchaea group</taxon>
        <taxon>Methanomicrobia</taxon>
        <taxon>Methanosarcinales</taxon>
        <taxon>Methanosarcinaceae</taxon>
        <taxon>Methanosarcina</taxon>
    </lineage>
</organism>
<reference key="1">
    <citation type="journal article" date="1987" name="Nucleic Acids Res.">
        <title>Nucleotide sequence of the methyl coenzyme M reductase gene cluster from Methanosarcina barkeri.</title>
        <authorList>
            <person name="Bokranz M."/>
            <person name="Klein A."/>
        </authorList>
    </citation>
    <scope>NUCLEOTIDE SEQUENCE [GENOMIC DNA]</scope>
</reference>
<reference key="2">
    <citation type="journal article" date="2006" name="J. Bacteriol.">
        <title>The Methanosarcina barkeri genome: comparative analysis with Methanosarcina acetivorans and Methanosarcina mazei reveals extensive rearrangement within methanosarcinal genomes.</title>
        <authorList>
            <person name="Maeder D.L."/>
            <person name="Anderson I."/>
            <person name="Brettin T.S."/>
            <person name="Bruce D.C."/>
            <person name="Gilna P."/>
            <person name="Han C.S."/>
            <person name="Lapidus A."/>
            <person name="Metcalf W.W."/>
            <person name="Saunders E."/>
            <person name="Tapia R."/>
            <person name="Sowers K.R."/>
        </authorList>
    </citation>
    <scope>NUCLEOTIDE SEQUENCE [LARGE SCALE GENOMIC DNA]</scope>
    <source>
        <strain>Fusaro / DSM 804</strain>
    </source>
</reference>
<accession>P07958</accession>
<accession>Q46E22</accession>
<proteinExistence type="predicted"/>
<protein>
    <recommendedName>
        <fullName>Methyl-coenzyme M reductase operon protein D</fullName>
    </recommendedName>
</protein>
<gene>
    <name type="primary">mcrD</name>
    <name type="ordered locus">Mbar_A0896</name>
</gene>